<protein>
    <recommendedName>
        <fullName evidence="1">Large ribosomal subunit protein bL25</fullName>
    </recommendedName>
    <alternativeName>
        <fullName evidence="2">50S ribosomal protein L25</fullName>
    </alternativeName>
    <alternativeName>
        <fullName evidence="1">General stress protein CTC</fullName>
    </alternativeName>
</protein>
<organism>
    <name type="scientific">Burkholderia vietnamiensis (strain G4 / LMG 22486)</name>
    <name type="common">Burkholderia cepacia (strain R1808)</name>
    <dbReference type="NCBI Taxonomy" id="269482"/>
    <lineage>
        <taxon>Bacteria</taxon>
        <taxon>Pseudomonadati</taxon>
        <taxon>Pseudomonadota</taxon>
        <taxon>Betaproteobacteria</taxon>
        <taxon>Burkholderiales</taxon>
        <taxon>Burkholderiaceae</taxon>
        <taxon>Burkholderia</taxon>
        <taxon>Burkholderia cepacia complex</taxon>
    </lineage>
</organism>
<evidence type="ECO:0000255" key="1">
    <source>
        <dbReference type="HAMAP-Rule" id="MF_01334"/>
    </source>
</evidence>
<evidence type="ECO:0000305" key="2"/>
<accession>A4JHZ6</accession>
<sequence>MKVVAFERQQQGTGASRRLRNAGKTTGIVYGGEAAPQKIELDHNALWHALKKEAFHASILDLEIAGQSQQVLLRDVQYHPFKQLVLHVDFQRVDAKKKLHTKVPLHFLNAEVSPAVKLSSAIVSHVTTEIEVECLPSALPEFLEVDLSKIEAGQSLHAKDIALPNGVALVAHVDAENPVVASATVPAGAVSDAAEGETPAA</sequence>
<gene>
    <name evidence="1" type="primary">rplY</name>
    <name evidence="1" type="synonym">ctc</name>
    <name type="ordered locus">Bcep1808_2908</name>
</gene>
<keyword id="KW-0687">Ribonucleoprotein</keyword>
<keyword id="KW-0689">Ribosomal protein</keyword>
<keyword id="KW-0694">RNA-binding</keyword>
<keyword id="KW-0699">rRNA-binding</keyword>
<feature type="chain" id="PRO_1000052876" description="Large ribosomal subunit protein bL25">
    <location>
        <begin position="1"/>
        <end position="201"/>
    </location>
</feature>
<name>RL25_BURVG</name>
<reference key="1">
    <citation type="submission" date="2007-03" db="EMBL/GenBank/DDBJ databases">
        <title>Complete sequence of chromosome 1 of Burkholderia vietnamiensis G4.</title>
        <authorList>
            <consortium name="US DOE Joint Genome Institute"/>
            <person name="Copeland A."/>
            <person name="Lucas S."/>
            <person name="Lapidus A."/>
            <person name="Barry K."/>
            <person name="Detter J.C."/>
            <person name="Glavina del Rio T."/>
            <person name="Hammon N."/>
            <person name="Israni S."/>
            <person name="Dalin E."/>
            <person name="Tice H."/>
            <person name="Pitluck S."/>
            <person name="Chain P."/>
            <person name="Malfatti S."/>
            <person name="Shin M."/>
            <person name="Vergez L."/>
            <person name="Schmutz J."/>
            <person name="Larimer F."/>
            <person name="Land M."/>
            <person name="Hauser L."/>
            <person name="Kyrpides N."/>
            <person name="Tiedje J."/>
            <person name="Richardson P."/>
        </authorList>
    </citation>
    <scope>NUCLEOTIDE SEQUENCE [LARGE SCALE GENOMIC DNA]</scope>
    <source>
        <strain>G4 / LMG 22486</strain>
    </source>
</reference>
<dbReference type="EMBL" id="CP000614">
    <property type="protein sequence ID" value="ABO55899.1"/>
    <property type="molecule type" value="Genomic_DNA"/>
</dbReference>
<dbReference type="SMR" id="A4JHZ6"/>
<dbReference type="KEGG" id="bvi:Bcep1808_2908"/>
<dbReference type="eggNOG" id="COG1825">
    <property type="taxonomic scope" value="Bacteria"/>
</dbReference>
<dbReference type="HOGENOM" id="CLU_075939_0_1_4"/>
<dbReference type="Proteomes" id="UP000002287">
    <property type="component" value="Chromosome 1"/>
</dbReference>
<dbReference type="GO" id="GO:0022625">
    <property type="term" value="C:cytosolic large ribosomal subunit"/>
    <property type="evidence" value="ECO:0007669"/>
    <property type="project" value="TreeGrafter"/>
</dbReference>
<dbReference type="GO" id="GO:0008097">
    <property type="term" value="F:5S rRNA binding"/>
    <property type="evidence" value="ECO:0007669"/>
    <property type="project" value="InterPro"/>
</dbReference>
<dbReference type="GO" id="GO:0003735">
    <property type="term" value="F:structural constituent of ribosome"/>
    <property type="evidence" value="ECO:0007669"/>
    <property type="project" value="InterPro"/>
</dbReference>
<dbReference type="GO" id="GO:0006412">
    <property type="term" value="P:translation"/>
    <property type="evidence" value="ECO:0007669"/>
    <property type="project" value="UniProtKB-UniRule"/>
</dbReference>
<dbReference type="CDD" id="cd00495">
    <property type="entry name" value="Ribosomal_L25_TL5_CTC"/>
    <property type="match status" value="1"/>
</dbReference>
<dbReference type="Gene3D" id="2.170.120.20">
    <property type="entry name" value="Ribosomal protein L25, beta domain"/>
    <property type="match status" value="1"/>
</dbReference>
<dbReference type="Gene3D" id="2.40.240.10">
    <property type="entry name" value="Ribosomal Protein L25, Chain P"/>
    <property type="match status" value="1"/>
</dbReference>
<dbReference type="HAMAP" id="MF_01334">
    <property type="entry name" value="Ribosomal_bL25_CTC"/>
    <property type="match status" value="1"/>
</dbReference>
<dbReference type="InterPro" id="IPR020056">
    <property type="entry name" value="Rbsml_bL25/Gln-tRNA_synth_N"/>
</dbReference>
<dbReference type="InterPro" id="IPR011035">
    <property type="entry name" value="Ribosomal_bL25/Gln-tRNA_synth"/>
</dbReference>
<dbReference type="InterPro" id="IPR020057">
    <property type="entry name" value="Ribosomal_bL25_b-dom"/>
</dbReference>
<dbReference type="InterPro" id="IPR037121">
    <property type="entry name" value="Ribosomal_bL25_C"/>
</dbReference>
<dbReference type="InterPro" id="IPR001021">
    <property type="entry name" value="Ribosomal_bL25_long"/>
</dbReference>
<dbReference type="InterPro" id="IPR029751">
    <property type="entry name" value="Ribosomal_L25_dom"/>
</dbReference>
<dbReference type="InterPro" id="IPR020930">
    <property type="entry name" value="Ribosomal_uL5_bac-type"/>
</dbReference>
<dbReference type="NCBIfam" id="TIGR00731">
    <property type="entry name" value="bL25_bact_ctc"/>
    <property type="match status" value="1"/>
</dbReference>
<dbReference type="NCBIfam" id="NF004128">
    <property type="entry name" value="PRK05618.1-2"/>
    <property type="match status" value="1"/>
</dbReference>
<dbReference type="NCBIfam" id="NF004130">
    <property type="entry name" value="PRK05618.1-5"/>
    <property type="match status" value="1"/>
</dbReference>
<dbReference type="NCBIfam" id="NF004612">
    <property type="entry name" value="PRK05943.1"/>
    <property type="match status" value="1"/>
</dbReference>
<dbReference type="PANTHER" id="PTHR33284">
    <property type="entry name" value="RIBOSOMAL PROTEIN L25/GLN-TRNA SYNTHETASE, ANTI-CODON-BINDING DOMAIN-CONTAINING PROTEIN"/>
    <property type="match status" value="1"/>
</dbReference>
<dbReference type="PANTHER" id="PTHR33284:SF1">
    <property type="entry name" value="RIBOSOMAL PROTEIN L25_GLN-TRNA SYNTHETASE, ANTI-CODON-BINDING DOMAIN-CONTAINING PROTEIN"/>
    <property type="match status" value="1"/>
</dbReference>
<dbReference type="Pfam" id="PF01386">
    <property type="entry name" value="Ribosomal_L25p"/>
    <property type="match status" value="1"/>
</dbReference>
<dbReference type="Pfam" id="PF14693">
    <property type="entry name" value="Ribosomal_TL5_C"/>
    <property type="match status" value="1"/>
</dbReference>
<dbReference type="SUPFAM" id="SSF50715">
    <property type="entry name" value="Ribosomal protein L25-like"/>
    <property type="match status" value="1"/>
</dbReference>
<proteinExistence type="inferred from homology"/>
<comment type="function">
    <text evidence="1">This is one of the proteins that binds to the 5S RNA in the ribosome where it forms part of the central protuberance.</text>
</comment>
<comment type="subunit">
    <text evidence="1">Part of the 50S ribosomal subunit; part of the 5S rRNA/L5/L18/L25 subcomplex. Contacts the 5S rRNA. Binds to the 5S rRNA independently of L5 and L18.</text>
</comment>
<comment type="similarity">
    <text evidence="1">Belongs to the bacterial ribosomal protein bL25 family. CTC subfamily.</text>
</comment>